<accession>Q92KZ3</accession>
<proteinExistence type="evidence at protein level"/>
<organism>
    <name type="scientific">Rhizobium meliloti (strain 1021)</name>
    <name type="common">Ensifer meliloti</name>
    <name type="synonym">Sinorhizobium meliloti</name>
    <dbReference type="NCBI Taxonomy" id="266834"/>
    <lineage>
        <taxon>Bacteria</taxon>
        <taxon>Pseudomonadati</taxon>
        <taxon>Pseudomonadota</taxon>
        <taxon>Alphaproteobacteria</taxon>
        <taxon>Hyphomicrobiales</taxon>
        <taxon>Rhizobiaceae</taxon>
        <taxon>Sinorhizobium/Ensifer group</taxon>
        <taxon>Sinorhizobium</taxon>
    </lineage>
</organism>
<sequence>MIRWGLIGASTIAREWVIGAIRAAGGEVVSVMSSSAERGEAYAAENGIAKAVTSVDDLVGDPDVDAVYISTTNELHHGQALAAIRAGKHVLCEKPLAMNLNDGCEMVLKACEAGVVLGTNHHLRNAATHRAMREAIAAGRIGRPIAARVFHAVYLPPHLQGWRLDKPEAGGGVILDITVHDADTLRFVLNDDPIEAVAISHSAGMGKEGLEDGVMGVLRFRSGVIAQFHDAFTTKFAETGLEVHGTAGSLIGRNVMTQRPVGTVVLRNEEGESELPLDHRNLYETAIAAFHSAIGGNGRPSASGEDGVWSLATGLAVVKAAATGGAVEIETGL</sequence>
<dbReference type="EC" id="1.1.1.292"/>
<dbReference type="EMBL" id="AL591688">
    <property type="protein sequence ID" value="CAC47884.1"/>
    <property type="molecule type" value="Genomic_DNA"/>
</dbReference>
<dbReference type="RefSeq" id="NP_387411.1">
    <property type="nucleotide sequence ID" value="NC_003047.1"/>
</dbReference>
<dbReference type="RefSeq" id="WP_003535887.1">
    <property type="nucleotide sequence ID" value="NC_003047.1"/>
</dbReference>
<dbReference type="PDB" id="4KOA">
    <property type="method" value="X-ray"/>
    <property type="resolution" value="1.93 A"/>
    <property type="chains" value="A=1-333"/>
</dbReference>
<dbReference type="PDBsum" id="4KOA"/>
<dbReference type="SMR" id="Q92KZ3"/>
<dbReference type="EnsemblBacteria" id="CAC47884">
    <property type="protein sequence ID" value="CAC47884"/>
    <property type="gene ID" value="SMc04400"/>
</dbReference>
<dbReference type="KEGG" id="sme:SMc04400"/>
<dbReference type="PATRIC" id="fig|266834.11.peg.4865"/>
<dbReference type="eggNOG" id="COG0673">
    <property type="taxonomic scope" value="Bacteria"/>
</dbReference>
<dbReference type="HOGENOM" id="CLU_023194_1_3_5"/>
<dbReference type="OrthoDB" id="9792935at2"/>
<dbReference type="BRENDA" id="1.1.1.263">
    <property type="organism ID" value="5347"/>
</dbReference>
<dbReference type="BRENDA" id="1.1.1.292">
    <property type="organism ID" value="5347"/>
</dbReference>
<dbReference type="EvolutionaryTrace" id="Q92KZ3"/>
<dbReference type="Proteomes" id="UP000001976">
    <property type="component" value="Chromosome"/>
</dbReference>
<dbReference type="GO" id="GO:0033712">
    <property type="term" value="F:1,5-anhydro-D-fructose reductase (1,5-anhydro-D-mannitol-forming) activity"/>
    <property type="evidence" value="ECO:0007669"/>
    <property type="project" value="UniProtKB-EC"/>
</dbReference>
<dbReference type="GO" id="GO:0000166">
    <property type="term" value="F:nucleotide binding"/>
    <property type="evidence" value="ECO:0007669"/>
    <property type="project" value="InterPro"/>
</dbReference>
<dbReference type="Gene3D" id="3.30.360.10">
    <property type="entry name" value="Dihydrodipicolinate Reductase, domain 2"/>
    <property type="match status" value="1"/>
</dbReference>
<dbReference type="Gene3D" id="3.40.50.720">
    <property type="entry name" value="NAD(P)-binding Rossmann-like Domain"/>
    <property type="match status" value="1"/>
</dbReference>
<dbReference type="InterPro" id="IPR000683">
    <property type="entry name" value="Gfo/Idh/MocA-like_OxRdtase_N"/>
</dbReference>
<dbReference type="InterPro" id="IPR050984">
    <property type="entry name" value="Gfo/Idh/MocA_domain"/>
</dbReference>
<dbReference type="InterPro" id="IPR055170">
    <property type="entry name" value="GFO_IDH_MocA-like_dom"/>
</dbReference>
<dbReference type="InterPro" id="IPR036291">
    <property type="entry name" value="NAD(P)-bd_dom_sf"/>
</dbReference>
<dbReference type="PANTHER" id="PTHR22604">
    <property type="entry name" value="OXIDOREDUCTASES"/>
    <property type="match status" value="1"/>
</dbReference>
<dbReference type="PANTHER" id="PTHR22604:SF105">
    <property type="entry name" value="TRANS-1,2-DIHYDROBENZENE-1,2-DIOL DEHYDROGENASE"/>
    <property type="match status" value="1"/>
</dbReference>
<dbReference type="Pfam" id="PF01408">
    <property type="entry name" value="GFO_IDH_MocA"/>
    <property type="match status" value="1"/>
</dbReference>
<dbReference type="Pfam" id="PF22725">
    <property type="entry name" value="GFO_IDH_MocA_C3"/>
    <property type="match status" value="1"/>
</dbReference>
<dbReference type="SUPFAM" id="SSF55347">
    <property type="entry name" value="Glyceraldehyde-3-phosphate dehydrogenase-like, C-terminal domain"/>
    <property type="match status" value="1"/>
</dbReference>
<dbReference type="SUPFAM" id="SSF51735">
    <property type="entry name" value="NAD(P)-binding Rossmann-fold domains"/>
    <property type="match status" value="1"/>
</dbReference>
<protein>
    <recommendedName>
        <fullName>1,5-anhydro-D-fructose reductase</fullName>
        <shortName>Anhydrofructose reductase</shortName>
        <ecNumber>1.1.1.292</ecNumber>
    </recommendedName>
    <alternativeName>
        <fullName>1,5-anhydro-D-fructose reductase (1,5-anhydro-D-mannitol-forming)</fullName>
    </alternativeName>
</protein>
<comment type="function">
    <text evidence="1">Catalyzes the NADPH-specific reduction of 1,5-anhydro-D-fructose to 1,5-anhydro-D-mannitol.</text>
</comment>
<comment type="catalytic activity">
    <reaction>
        <text>1,5-anhydro-D-mannitol + NADP(+) = 1,5-anhydro-D-fructose + NADPH + H(+)</text>
        <dbReference type="Rhea" id="RHEA:24208"/>
        <dbReference type="ChEBI" id="CHEBI:15378"/>
        <dbReference type="ChEBI" id="CHEBI:16715"/>
        <dbReference type="ChEBI" id="CHEBI:49182"/>
        <dbReference type="ChEBI" id="CHEBI:57783"/>
        <dbReference type="ChEBI" id="CHEBI:58349"/>
        <dbReference type="EC" id="1.1.1.292"/>
    </reaction>
</comment>
<comment type="subunit">
    <text evidence="1">Monomer.</text>
</comment>
<comment type="similarity">
    <text evidence="2">Belongs to the Gfo/Idh/MocA family.</text>
</comment>
<keyword id="KW-0002">3D-structure</keyword>
<keyword id="KW-0521">NADP</keyword>
<keyword id="KW-0560">Oxidoreductase</keyword>
<keyword id="KW-1185">Reference proteome</keyword>
<evidence type="ECO:0000250" key="1"/>
<evidence type="ECO:0000305" key="2"/>
<evidence type="ECO:0007829" key="3">
    <source>
        <dbReference type="PDB" id="4KOA"/>
    </source>
</evidence>
<reference key="1">
    <citation type="journal article" date="2001" name="Proc. Natl. Acad. Sci. U.S.A.">
        <title>Analysis of the chromosome sequence of the legume symbiont Sinorhizobium meliloti strain 1021.</title>
        <authorList>
            <person name="Capela D."/>
            <person name="Barloy-Hubler F."/>
            <person name="Gouzy J."/>
            <person name="Bothe G."/>
            <person name="Ampe F."/>
            <person name="Batut J."/>
            <person name="Boistard P."/>
            <person name="Becker A."/>
            <person name="Boutry M."/>
            <person name="Cadieu E."/>
            <person name="Dreano S."/>
            <person name="Gloux S."/>
            <person name="Godrie T."/>
            <person name="Goffeau A."/>
            <person name="Kahn D."/>
            <person name="Kiss E."/>
            <person name="Lelaure V."/>
            <person name="Masuy D."/>
            <person name="Pohl T."/>
            <person name="Portetelle D."/>
            <person name="Puehler A."/>
            <person name="Purnelle B."/>
            <person name="Ramsperger U."/>
            <person name="Renard C."/>
            <person name="Thebault P."/>
            <person name="Vandenbol M."/>
            <person name="Weidner S."/>
            <person name="Galibert F."/>
        </authorList>
    </citation>
    <scope>NUCLEOTIDE SEQUENCE [LARGE SCALE GENOMIC DNA]</scope>
    <source>
        <strain>1021</strain>
    </source>
</reference>
<reference key="2">
    <citation type="journal article" date="2001" name="Science">
        <title>The composite genome of the legume symbiont Sinorhizobium meliloti.</title>
        <authorList>
            <person name="Galibert F."/>
            <person name="Finan T.M."/>
            <person name="Long S.R."/>
            <person name="Puehler A."/>
            <person name="Abola P."/>
            <person name="Ampe F."/>
            <person name="Barloy-Hubler F."/>
            <person name="Barnett M.J."/>
            <person name="Becker A."/>
            <person name="Boistard P."/>
            <person name="Bothe G."/>
            <person name="Boutry M."/>
            <person name="Bowser L."/>
            <person name="Buhrmester J."/>
            <person name="Cadieu E."/>
            <person name="Capela D."/>
            <person name="Chain P."/>
            <person name="Cowie A."/>
            <person name="Davis R.W."/>
            <person name="Dreano S."/>
            <person name="Federspiel N.A."/>
            <person name="Fisher R.F."/>
            <person name="Gloux S."/>
            <person name="Godrie T."/>
            <person name="Goffeau A."/>
            <person name="Golding B."/>
            <person name="Gouzy J."/>
            <person name="Gurjal M."/>
            <person name="Hernandez-Lucas I."/>
            <person name="Hong A."/>
            <person name="Huizar L."/>
            <person name="Hyman R.W."/>
            <person name="Jones T."/>
            <person name="Kahn D."/>
            <person name="Kahn M.L."/>
            <person name="Kalman S."/>
            <person name="Keating D.H."/>
            <person name="Kiss E."/>
            <person name="Komp C."/>
            <person name="Lelaure V."/>
            <person name="Masuy D."/>
            <person name="Palm C."/>
            <person name="Peck M.C."/>
            <person name="Pohl T.M."/>
            <person name="Portetelle D."/>
            <person name="Purnelle B."/>
            <person name="Ramsperger U."/>
            <person name="Surzycki R."/>
            <person name="Thebault P."/>
            <person name="Vandenbol M."/>
            <person name="Vorhoelter F.J."/>
            <person name="Weidner S."/>
            <person name="Wells D.H."/>
            <person name="Wong K."/>
            <person name="Yeh K.-C."/>
            <person name="Batut J."/>
        </authorList>
    </citation>
    <scope>NUCLEOTIDE SEQUENCE [LARGE SCALE GENOMIC DNA]</scope>
    <source>
        <strain>1021</strain>
    </source>
</reference>
<name>AFR_RHIME</name>
<gene>
    <name type="primary">afr</name>
    <name type="ordered locus">R03305</name>
    <name type="ORF">SMc04400</name>
</gene>
<feature type="chain" id="PRO_0000382697" description="1,5-anhydro-D-fructose reductase">
    <location>
        <begin position="1"/>
        <end position="333"/>
    </location>
</feature>
<feature type="binding site" evidence="1">
    <location>
        <begin position="9"/>
        <end position="12"/>
    </location>
    <ligand>
        <name>NADP(+)</name>
        <dbReference type="ChEBI" id="CHEBI:58349"/>
    </ligand>
</feature>
<feature type="binding site" evidence="1">
    <location>
        <begin position="33"/>
        <end position="34"/>
    </location>
    <ligand>
        <name>NADP(+)</name>
        <dbReference type="ChEBI" id="CHEBI:58349"/>
    </ligand>
</feature>
<feature type="binding site" evidence="1">
    <location>
        <position position="38"/>
    </location>
    <ligand>
        <name>NADP(+)</name>
        <dbReference type="ChEBI" id="CHEBI:58349"/>
    </ligand>
</feature>
<feature type="binding site" evidence="1">
    <location>
        <begin position="71"/>
        <end position="76"/>
    </location>
    <ligand>
        <name>NADP(+)</name>
        <dbReference type="ChEBI" id="CHEBI:58349"/>
    </ligand>
</feature>
<feature type="binding site" evidence="1">
    <location>
        <begin position="93"/>
        <end position="94"/>
    </location>
    <ligand>
        <name>NADP(+)</name>
        <dbReference type="ChEBI" id="CHEBI:58349"/>
    </ligand>
</feature>
<feature type="binding site" evidence="1">
    <location>
        <position position="120"/>
    </location>
    <ligand>
        <name>NADP(+)</name>
        <dbReference type="ChEBI" id="CHEBI:58349"/>
    </ligand>
</feature>
<feature type="binding site" evidence="1">
    <location>
        <begin position="162"/>
        <end position="163"/>
    </location>
    <ligand>
        <name>NADP(+)</name>
        <dbReference type="ChEBI" id="CHEBI:58349"/>
    </ligand>
</feature>
<feature type="binding site" evidence="1">
    <location>
        <position position="283"/>
    </location>
    <ligand>
        <name>NADP(+)</name>
        <dbReference type="ChEBI" id="CHEBI:58349"/>
    </ligand>
</feature>
<feature type="strand" evidence="3">
    <location>
        <begin position="3"/>
        <end position="8"/>
    </location>
</feature>
<feature type="helix" evidence="3">
    <location>
        <begin position="11"/>
        <end position="15"/>
    </location>
</feature>
<feature type="helix" evidence="3">
    <location>
        <begin position="17"/>
        <end position="23"/>
    </location>
</feature>
<feature type="strand" evidence="3">
    <location>
        <begin position="27"/>
        <end position="32"/>
    </location>
</feature>
<feature type="helix" evidence="3">
    <location>
        <begin position="36"/>
        <end position="45"/>
    </location>
</feature>
<feature type="strand" evidence="3">
    <location>
        <begin position="49"/>
        <end position="53"/>
    </location>
</feature>
<feature type="helix" evidence="3">
    <location>
        <begin position="55"/>
        <end position="59"/>
    </location>
</feature>
<feature type="strand" evidence="3">
    <location>
        <begin position="66"/>
        <end position="69"/>
    </location>
</feature>
<feature type="helix" evidence="3">
    <location>
        <begin position="73"/>
        <end position="75"/>
    </location>
</feature>
<feature type="helix" evidence="3">
    <location>
        <begin position="76"/>
        <end position="85"/>
    </location>
</feature>
<feature type="strand" evidence="3">
    <location>
        <begin position="89"/>
        <end position="92"/>
    </location>
</feature>
<feature type="helix" evidence="3">
    <location>
        <begin position="100"/>
        <end position="113"/>
    </location>
</feature>
<feature type="strand" evidence="3">
    <location>
        <begin position="117"/>
        <end position="119"/>
    </location>
</feature>
<feature type="helix" evidence="3">
    <location>
        <begin position="123"/>
        <end position="125"/>
    </location>
</feature>
<feature type="helix" evidence="3">
    <location>
        <begin position="127"/>
        <end position="137"/>
    </location>
</feature>
<feature type="turn" evidence="3">
    <location>
        <begin position="138"/>
        <end position="141"/>
    </location>
</feature>
<feature type="strand" evidence="3">
    <location>
        <begin position="142"/>
        <end position="152"/>
    </location>
</feature>
<feature type="strand" evidence="3">
    <location>
        <begin position="160"/>
        <end position="164"/>
    </location>
</feature>
<feature type="helix" evidence="3">
    <location>
        <begin position="173"/>
        <end position="176"/>
    </location>
</feature>
<feature type="helix" evidence="3">
    <location>
        <begin position="178"/>
        <end position="189"/>
    </location>
</feature>
<feature type="strand" evidence="3">
    <location>
        <begin position="193"/>
        <end position="208"/>
    </location>
</feature>
<feature type="strand" evidence="3">
    <location>
        <begin position="211"/>
        <end position="220"/>
    </location>
</feature>
<feature type="strand" evidence="3">
    <location>
        <begin position="225"/>
        <end position="233"/>
    </location>
</feature>
<feature type="strand" evidence="3">
    <location>
        <begin position="240"/>
        <end position="247"/>
    </location>
</feature>
<feature type="strand" evidence="3">
    <location>
        <begin position="249"/>
        <end position="254"/>
    </location>
</feature>
<feature type="strand" evidence="3">
    <location>
        <begin position="256"/>
        <end position="260"/>
    </location>
</feature>
<feature type="strand" evidence="3">
    <location>
        <begin position="263"/>
        <end position="268"/>
    </location>
</feature>
<feature type="strand" evidence="3">
    <location>
        <begin position="271"/>
        <end position="274"/>
    </location>
</feature>
<feature type="helix" evidence="3">
    <location>
        <begin position="282"/>
        <end position="294"/>
    </location>
</feature>
<feature type="strand" evidence="3">
    <location>
        <begin position="301"/>
        <end position="303"/>
    </location>
</feature>
<feature type="helix" evidence="3">
    <location>
        <begin position="304"/>
        <end position="323"/>
    </location>
</feature>